<protein>
    <recommendedName>
        <fullName evidence="1">Lipoyl synthase, mitochondrial</fullName>
        <ecNumber evidence="1">2.8.1.8</ecNumber>
    </recommendedName>
    <alternativeName>
        <fullName evidence="1">Lipoate synthase</fullName>
        <shortName evidence="1">LS</shortName>
        <shortName evidence="1">Lip-syn</shortName>
    </alternativeName>
    <alternativeName>
        <fullName evidence="1">Lipoic acid synthase</fullName>
    </alternativeName>
</protein>
<reference key="1">
    <citation type="journal article" date="2015" name="Genome Announc.">
        <title>Genome sequence of Aspergillus flavus NRRL 3357, a strain that causes aflatoxin contamination of food and feed.</title>
        <authorList>
            <person name="Nierman W.C."/>
            <person name="Yu J."/>
            <person name="Fedorova-Abrams N.D."/>
            <person name="Losada L."/>
            <person name="Cleveland T.E."/>
            <person name="Bhatnagar D."/>
            <person name="Bennett J.W."/>
            <person name="Dean R."/>
            <person name="Payne G.A."/>
        </authorList>
    </citation>
    <scope>NUCLEOTIDE SEQUENCE [LARGE SCALE GENOMIC DNA]</scope>
    <source>
        <strain>ATCC 200026 / FGSC A1120 / IAM 13836 / NRRL 3357 / JCM 12722 / SRRC 167</strain>
    </source>
</reference>
<feature type="transit peptide" description="Mitochondrion" evidence="1">
    <location>
        <begin position="1"/>
        <end position="32"/>
    </location>
</feature>
<feature type="chain" id="PRO_0000398252" description="Lipoyl synthase, mitochondrial">
    <location>
        <begin position="33"/>
        <end position="415"/>
    </location>
</feature>
<feature type="domain" description="Radical SAM core" evidence="2">
    <location>
        <begin position="146"/>
        <end position="367"/>
    </location>
</feature>
<feature type="region of interest" description="Disordered" evidence="3">
    <location>
        <begin position="20"/>
        <end position="53"/>
    </location>
</feature>
<feature type="region of interest" description="Disordered" evidence="3">
    <location>
        <begin position="395"/>
        <end position="415"/>
    </location>
</feature>
<feature type="compositionally biased region" description="Polar residues" evidence="3">
    <location>
        <begin position="20"/>
        <end position="32"/>
    </location>
</feature>
<feature type="compositionally biased region" description="Low complexity" evidence="3">
    <location>
        <begin position="33"/>
        <end position="47"/>
    </location>
</feature>
<feature type="binding site" evidence="1">
    <location>
        <position position="132"/>
    </location>
    <ligand>
        <name>[4Fe-4S] cluster</name>
        <dbReference type="ChEBI" id="CHEBI:49883"/>
        <label>1</label>
    </ligand>
</feature>
<feature type="binding site" evidence="1">
    <location>
        <position position="137"/>
    </location>
    <ligand>
        <name>[4Fe-4S] cluster</name>
        <dbReference type="ChEBI" id="CHEBI:49883"/>
        <label>1</label>
    </ligand>
</feature>
<feature type="binding site" evidence="1">
    <location>
        <position position="143"/>
    </location>
    <ligand>
        <name>[4Fe-4S] cluster</name>
        <dbReference type="ChEBI" id="CHEBI:49883"/>
        <label>1</label>
    </ligand>
</feature>
<feature type="binding site" evidence="1">
    <location>
        <position position="163"/>
    </location>
    <ligand>
        <name>[4Fe-4S] cluster</name>
        <dbReference type="ChEBI" id="CHEBI:49883"/>
        <label>2</label>
        <note>4Fe-4S-S-AdoMet</note>
    </ligand>
</feature>
<feature type="binding site" evidence="1">
    <location>
        <position position="167"/>
    </location>
    <ligand>
        <name>[4Fe-4S] cluster</name>
        <dbReference type="ChEBI" id="CHEBI:49883"/>
        <label>2</label>
        <note>4Fe-4S-S-AdoMet</note>
    </ligand>
</feature>
<feature type="binding site" evidence="1">
    <location>
        <position position="170"/>
    </location>
    <ligand>
        <name>[4Fe-4S] cluster</name>
        <dbReference type="ChEBI" id="CHEBI:49883"/>
        <label>2</label>
        <note>4Fe-4S-S-AdoMet</note>
    </ligand>
</feature>
<feature type="binding site" evidence="1">
    <location>
        <position position="378"/>
    </location>
    <ligand>
        <name>[4Fe-4S] cluster</name>
        <dbReference type="ChEBI" id="CHEBI:49883"/>
        <label>1</label>
    </ligand>
</feature>
<evidence type="ECO:0000255" key="1">
    <source>
        <dbReference type="HAMAP-Rule" id="MF_03123"/>
    </source>
</evidence>
<evidence type="ECO:0000255" key="2">
    <source>
        <dbReference type="PROSITE-ProRule" id="PRU01266"/>
    </source>
</evidence>
<evidence type="ECO:0000256" key="3">
    <source>
        <dbReference type="SAM" id="MobiDB-lite"/>
    </source>
</evidence>
<proteinExistence type="inferred from homology"/>
<gene>
    <name type="ORF">AFLA_100710</name>
</gene>
<dbReference type="EC" id="2.8.1.8" evidence="1"/>
<dbReference type="EMBL" id="EQ963484">
    <property type="protein sequence ID" value="EED46407.1"/>
    <property type="molecule type" value="Genomic_DNA"/>
</dbReference>
<dbReference type="RefSeq" id="XP_002383943.1">
    <property type="nucleotide sequence ID" value="XM_002383902.1"/>
</dbReference>
<dbReference type="SMR" id="B8NUL8"/>
<dbReference type="STRING" id="332952.B8NUL8"/>
<dbReference type="EnsemblFungi" id="EED46407">
    <property type="protein sequence ID" value="EED46407"/>
    <property type="gene ID" value="AFLA_100710"/>
</dbReference>
<dbReference type="VEuPathDB" id="FungiDB:AFLA_010318"/>
<dbReference type="eggNOG" id="KOG2672">
    <property type="taxonomic scope" value="Eukaryota"/>
</dbReference>
<dbReference type="HOGENOM" id="CLU_033144_2_0_1"/>
<dbReference type="OMA" id="PYCDIDF"/>
<dbReference type="UniPathway" id="UPA00538">
    <property type="reaction ID" value="UER00593"/>
</dbReference>
<dbReference type="GO" id="GO:0005739">
    <property type="term" value="C:mitochondrion"/>
    <property type="evidence" value="ECO:0007669"/>
    <property type="project" value="UniProtKB-SubCell"/>
</dbReference>
<dbReference type="GO" id="GO:0051539">
    <property type="term" value="F:4 iron, 4 sulfur cluster binding"/>
    <property type="evidence" value="ECO:0007669"/>
    <property type="project" value="UniProtKB-UniRule"/>
</dbReference>
<dbReference type="GO" id="GO:0016992">
    <property type="term" value="F:lipoate synthase activity"/>
    <property type="evidence" value="ECO:0007669"/>
    <property type="project" value="UniProtKB-UniRule"/>
</dbReference>
<dbReference type="GO" id="GO:0046872">
    <property type="term" value="F:metal ion binding"/>
    <property type="evidence" value="ECO:0007669"/>
    <property type="project" value="UniProtKB-KW"/>
</dbReference>
<dbReference type="CDD" id="cd01335">
    <property type="entry name" value="Radical_SAM"/>
    <property type="match status" value="1"/>
</dbReference>
<dbReference type="FunFam" id="3.20.20.70:FF:000036">
    <property type="entry name" value="Lipoyl synthase, mitochondrial"/>
    <property type="match status" value="1"/>
</dbReference>
<dbReference type="Gene3D" id="3.20.20.70">
    <property type="entry name" value="Aldolase class I"/>
    <property type="match status" value="1"/>
</dbReference>
<dbReference type="HAMAP" id="MF_00206">
    <property type="entry name" value="Lipoyl_synth"/>
    <property type="match status" value="1"/>
</dbReference>
<dbReference type="InterPro" id="IPR013785">
    <property type="entry name" value="Aldolase_TIM"/>
</dbReference>
<dbReference type="InterPro" id="IPR006638">
    <property type="entry name" value="Elp3/MiaA/NifB-like_rSAM"/>
</dbReference>
<dbReference type="InterPro" id="IPR031691">
    <property type="entry name" value="LIAS_N"/>
</dbReference>
<dbReference type="InterPro" id="IPR003698">
    <property type="entry name" value="Lipoyl_synth"/>
</dbReference>
<dbReference type="InterPro" id="IPR007197">
    <property type="entry name" value="rSAM"/>
</dbReference>
<dbReference type="NCBIfam" id="TIGR00510">
    <property type="entry name" value="lipA"/>
    <property type="match status" value="1"/>
</dbReference>
<dbReference type="NCBIfam" id="NF004019">
    <property type="entry name" value="PRK05481.1"/>
    <property type="match status" value="1"/>
</dbReference>
<dbReference type="NCBIfam" id="NF009544">
    <property type="entry name" value="PRK12928.1"/>
    <property type="match status" value="1"/>
</dbReference>
<dbReference type="PANTHER" id="PTHR10949">
    <property type="entry name" value="LIPOYL SYNTHASE"/>
    <property type="match status" value="1"/>
</dbReference>
<dbReference type="PANTHER" id="PTHR10949:SF0">
    <property type="entry name" value="LIPOYL SYNTHASE, MITOCHONDRIAL"/>
    <property type="match status" value="1"/>
</dbReference>
<dbReference type="Pfam" id="PF16881">
    <property type="entry name" value="LIAS_N"/>
    <property type="match status" value="1"/>
</dbReference>
<dbReference type="Pfam" id="PF04055">
    <property type="entry name" value="Radical_SAM"/>
    <property type="match status" value="1"/>
</dbReference>
<dbReference type="SFLD" id="SFLDF00271">
    <property type="entry name" value="lipoyl_synthase"/>
    <property type="match status" value="1"/>
</dbReference>
<dbReference type="SFLD" id="SFLDS00029">
    <property type="entry name" value="Radical_SAM"/>
    <property type="match status" value="1"/>
</dbReference>
<dbReference type="SMART" id="SM00729">
    <property type="entry name" value="Elp3"/>
    <property type="match status" value="1"/>
</dbReference>
<dbReference type="SUPFAM" id="SSF102114">
    <property type="entry name" value="Radical SAM enzymes"/>
    <property type="match status" value="1"/>
</dbReference>
<dbReference type="PROSITE" id="PS51918">
    <property type="entry name" value="RADICAL_SAM"/>
    <property type="match status" value="1"/>
</dbReference>
<organism>
    <name type="scientific">Aspergillus flavus (strain ATCC 200026 / FGSC A1120 / IAM 13836 / NRRL 3357 / JCM 12722 / SRRC 167)</name>
    <dbReference type="NCBI Taxonomy" id="332952"/>
    <lineage>
        <taxon>Eukaryota</taxon>
        <taxon>Fungi</taxon>
        <taxon>Dikarya</taxon>
        <taxon>Ascomycota</taxon>
        <taxon>Pezizomycotina</taxon>
        <taxon>Eurotiomycetes</taxon>
        <taxon>Eurotiomycetidae</taxon>
        <taxon>Eurotiales</taxon>
        <taxon>Aspergillaceae</taxon>
        <taxon>Aspergillus</taxon>
        <taxon>Aspergillus subgen. Circumdati</taxon>
    </lineage>
</organism>
<accession>B8NUL8</accession>
<name>LIPA_ASPFN</name>
<keyword id="KW-0004">4Fe-4S</keyword>
<keyword id="KW-0408">Iron</keyword>
<keyword id="KW-0411">Iron-sulfur</keyword>
<keyword id="KW-0479">Metal-binding</keyword>
<keyword id="KW-0496">Mitochondrion</keyword>
<keyword id="KW-0949">S-adenosyl-L-methionine</keyword>
<keyword id="KW-0808">Transferase</keyword>
<keyword id="KW-0809">Transit peptide</keyword>
<comment type="function">
    <text evidence="1">Catalyzes the radical-mediated insertion of two sulfur atoms into the C-6 and C-8 positions of the octanoyl moiety bound to the lipoyl domains of lipoate-dependent enzymes, thereby converting the octanoylated domains into lipoylated derivatives.</text>
</comment>
<comment type="catalytic activity">
    <reaction evidence="1">
        <text>[[Fe-S] cluster scaffold protein carrying a second [4Fe-4S](2+) cluster] + N(6)-octanoyl-L-lysyl-[protein] + 2 oxidized [2Fe-2S]-[ferredoxin] + 2 S-adenosyl-L-methionine + 4 H(+) = [[Fe-S] cluster scaffold protein] + N(6)-[(R)-dihydrolipoyl]-L-lysyl-[protein] + 4 Fe(3+) + 2 hydrogen sulfide + 2 5'-deoxyadenosine + 2 L-methionine + 2 reduced [2Fe-2S]-[ferredoxin]</text>
        <dbReference type="Rhea" id="RHEA:16585"/>
        <dbReference type="Rhea" id="RHEA-COMP:9928"/>
        <dbReference type="Rhea" id="RHEA-COMP:10000"/>
        <dbReference type="Rhea" id="RHEA-COMP:10001"/>
        <dbReference type="Rhea" id="RHEA-COMP:10475"/>
        <dbReference type="Rhea" id="RHEA-COMP:14568"/>
        <dbReference type="Rhea" id="RHEA-COMP:14569"/>
        <dbReference type="ChEBI" id="CHEBI:15378"/>
        <dbReference type="ChEBI" id="CHEBI:17319"/>
        <dbReference type="ChEBI" id="CHEBI:29034"/>
        <dbReference type="ChEBI" id="CHEBI:29919"/>
        <dbReference type="ChEBI" id="CHEBI:33722"/>
        <dbReference type="ChEBI" id="CHEBI:33737"/>
        <dbReference type="ChEBI" id="CHEBI:33738"/>
        <dbReference type="ChEBI" id="CHEBI:57844"/>
        <dbReference type="ChEBI" id="CHEBI:59789"/>
        <dbReference type="ChEBI" id="CHEBI:78809"/>
        <dbReference type="ChEBI" id="CHEBI:83100"/>
        <dbReference type="EC" id="2.8.1.8"/>
    </reaction>
</comment>
<comment type="cofactor">
    <cofactor evidence="1">
        <name>[4Fe-4S] cluster</name>
        <dbReference type="ChEBI" id="CHEBI:49883"/>
    </cofactor>
    <text evidence="1">Binds 2 [4Fe-4S] clusters per subunit. One cluster is coordinated with 3 cysteines and an exchangeable S-adenosyl-L-methionine.</text>
</comment>
<comment type="pathway">
    <text evidence="1">Protein modification; protein lipoylation via endogenous pathway; protein N(6)-(lipoyl)lysine from octanoyl-[acyl-carrier-protein]: step 2/2.</text>
</comment>
<comment type="subcellular location">
    <subcellularLocation>
        <location evidence="1">Mitochondrion</location>
    </subcellularLocation>
</comment>
<comment type="similarity">
    <text evidence="1">Belongs to the radical SAM superfamily. Lipoyl synthase family.</text>
</comment>
<sequence length="415" mass="45848">MAASTNRLRFLYSSARTVPQTGSITPISRRTYATTEPSPSATGAPATARKRTNFTDKLNAGPSFADFVSGGEDNTPLEPSEAYALKTAMVGPAGRKKEMTRLPSWLKTPIPDSKNYQRLKKDLRGLNLHTVCEEARCPNISDCWGGSDKSAATATIMLMGDTCTRGCRFCSVKTNRRPPPLDPHEPENTAEAISRWSLGYVVLTSVDRDDLADGGARHFAETVIKIKQKKPSMLVECLTGDYLGDLEMVKLVARSGLDVYAHNVETVEALTPFVRDRRATFQQSLRVLEAAKQARPDLITKTSLMLGFGETEEQLWDALRQLRSVGVDVVTFGQYMRPTKRHMPVHEYVTPDQFELWRQRALDMGFLYCASGPLVRSSYKAGEAFIENVLKKRRAAGTAGESVTDSKAAVDEATR</sequence>